<proteinExistence type="evidence at protein level"/>
<gene>
    <name type="ORF">SPAC17H9.06c</name>
</gene>
<sequence>MVSNQDNVQRNDVQKYPITRFVKRKSNVVLKKNKGAMKSNSNSRSRGNKKLKESQFSSRDNFRTTQTQASSSSEPSDNTNRLVPVVIIDNNTPKKEESNAEKLKLDKDSSSVNYENQISKPLITFSDIHETVNVPFLCLDKHDSKNEVAINSHEDSPVCLEDITGSLSSTYGNDSLGESNLEELPTSDKIKGENMGSRKKRKGFVIDSEDSDTGIPREENVTITRKTKLSSNILYSDSDTERQSDSGSKNVARQFSRIKRKRKVLSSSSEDDESSSPEDLLKPIIRSTEEMENLNELEQEVQDLDPIDEGFEEKVPRFRNPSKKAFYEKLHSLRNRSYSKLESLTSEKSDTLITKSELANESEEDDFIVDDEDTEVMMNARSLLPAEFSMTSHQGLKAHFRNFMMFIVQQAIDPIDASDISDHYLFSRRTIRKQLYSSVDSNIISSIWQSEFIKLIKTVPNMKSAKIDATYGCDACNIHTRMSTQIVYFKGMPYNEHNYKELDSFEPITKEAWMLGNSCFNRARIAHSIYHWEYKVSRHIQVELKFREASNTSEQGKNIVESIYEDLKDSNFFETTWVELCNLLKLASSSFESNFHSRSSM</sequence>
<name>YE06_SCHPO</name>
<protein>
    <recommendedName>
        <fullName>Uncharacterized protein C17H9.06c</fullName>
    </recommendedName>
</protein>
<reference key="1">
    <citation type="journal article" date="2002" name="Nature">
        <title>The genome sequence of Schizosaccharomyces pombe.</title>
        <authorList>
            <person name="Wood V."/>
            <person name="Gwilliam R."/>
            <person name="Rajandream M.A."/>
            <person name="Lyne M.H."/>
            <person name="Lyne R."/>
            <person name="Stewart A."/>
            <person name="Sgouros J.G."/>
            <person name="Peat N."/>
            <person name="Hayles J."/>
            <person name="Baker S.G."/>
            <person name="Basham D."/>
            <person name="Bowman S."/>
            <person name="Brooks K."/>
            <person name="Brown D."/>
            <person name="Brown S."/>
            <person name="Chillingworth T."/>
            <person name="Churcher C.M."/>
            <person name="Collins M."/>
            <person name="Connor R."/>
            <person name="Cronin A."/>
            <person name="Davis P."/>
            <person name="Feltwell T."/>
            <person name="Fraser A."/>
            <person name="Gentles S."/>
            <person name="Goble A."/>
            <person name="Hamlin N."/>
            <person name="Harris D.E."/>
            <person name="Hidalgo J."/>
            <person name="Hodgson G."/>
            <person name="Holroyd S."/>
            <person name="Hornsby T."/>
            <person name="Howarth S."/>
            <person name="Huckle E.J."/>
            <person name="Hunt S."/>
            <person name="Jagels K."/>
            <person name="James K.D."/>
            <person name="Jones L."/>
            <person name="Jones M."/>
            <person name="Leather S."/>
            <person name="McDonald S."/>
            <person name="McLean J."/>
            <person name="Mooney P."/>
            <person name="Moule S."/>
            <person name="Mungall K.L."/>
            <person name="Murphy L.D."/>
            <person name="Niblett D."/>
            <person name="Odell C."/>
            <person name="Oliver K."/>
            <person name="O'Neil S."/>
            <person name="Pearson D."/>
            <person name="Quail M.A."/>
            <person name="Rabbinowitsch E."/>
            <person name="Rutherford K.M."/>
            <person name="Rutter S."/>
            <person name="Saunders D."/>
            <person name="Seeger K."/>
            <person name="Sharp S."/>
            <person name="Skelton J."/>
            <person name="Simmonds M.N."/>
            <person name="Squares R."/>
            <person name="Squares S."/>
            <person name="Stevens K."/>
            <person name="Taylor K."/>
            <person name="Taylor R.G."/>
            <person name="Tivey A."/>
            <person name="Walsh S.V."/>
            <person name="Warren T."/>
            <person name="Whitehead S."/>
            <person name="Woodward J.R."/>
            <person name="Volckaert G."/>
            <person name="Aert R."/>
            <person name="Robben J."/>
            <person name="Grymonprez B."/>
            <person name="Weltjens I."/>
            <person name="Vanstreels E."/>
            <person name="Rieger M."/>
            <person name="Schaefer M."/>
            <person name="Mueller-Auer S."/>
            <person name="Gabel C."/>
            <person name="Fuchs M."/>
            <person name="Duesterhoeft A."/>
            <person name="Fritzc C."/>
            <person name="Holzer E."/>
            <person name="Moestl D."/>
            <person name="Hilbert H."/>
            <person name="Borzym K."/>
            <person name="Langer I."/>
            <person name="Beck A."/>
            <person name="Lehrach H."/>
            <person name="Reinhardt R."/>
            <person name="Pohl T.M."/>
            <person name="Eger P."/>
            <person name="Zimmermann W."/>
            <person name="Wedler H."/>
            <person name="Wambutt R."/>
            <person name="Purnelle B."/>
            <person name="Goffeau A."/>
            <person name="Cadieu E."/>
            <person name="Dreano S."/>
            <person name="Gloux S."/>
            <person name="Lelaure V."/>
            <person name="Mottier S."/>
            <person name="Galibert F."/>
            <person name="Aves S.J."/>
            <person name="Xiang Z."/>
            <person name="Hunt C."/>
            <person name="Moore K."/>
            <person name="Hurst S.M."/>
            <person name="Lucas M."/>
            <person name="Rochet M."/>
            <person name="Gaillardin C."/>
            <person name="Tallada V.A."/>
            <person name="Garzon A."/>
            <person name="Thode G."/>
            <person name="Daga R.R."/>
            <person name="Cruzado L."/>
            <person name="Jimenez J."/>
            <person name="Sanchez M."/>
            <person name="del Rey F."/>
            <person name="Benito J."/>
            <person name="Dominguez A."/>
            <person name="Revuelta J.L."/>
            <person name="Moreno S."/>
            <person name="Armstrong J."/>
            <person name="Forsburg S.L."/>
            <person name="Cerutti L."/>
            <person name="Lowe T."/>
            <person name="McCombie W.R."/>
            <person name="Paulsen I."/>
            <person name="Potashkin J."/>
            <person name="Shpakovski G.V."/>
            <person name="Ussery D."/>
            <person name="Barrell B.G."/>
            <person name="Nurse P."/>
        </authorList>
    </citation>
    <scope>NUCLEOTIDE SEQUENCE [LARGE SCALE GENOMIC DNA]</scope>
    <source>
        <strain>972 / ATCC 24843</strain>
    </source>
</reference>
<reference key="2">
    <citation type="journal article" date="2000" name="Genes Cells">
        <title>Large-scale screening of intracellular protein localization in living fission yeast cells by the use of a GFP-fusion genomic DNA library.</title>
        <authorList>
            <person name="Ding D.-Q."/>
            <person name="Tomita Y."/>
            <person name="Yamamoto A."/>
            <person name="Chikashige Y."/>
            <person name="Haraguchi T."/>
            <person name="Hiraoka Y."/>
        </authorList>
    </citation>
    <scope>NUCLEOTIDE SEQUENCE [LARGE SCALE GENOMIC DNA] OF 161-287</scope>
    <scope>SUBCELLULAR LOCATION</scope>
    <source>
        <strain>ATCC 38364 / 968</strain>
    </source>
</reference>
<reference key="3">
    <citation type="journal article" date="2006" name="Nat. Biotechnol.">
        <title>ORFeome cloning and global analysis of protein localization in the fission yeast Schizosaccharomyces pombe.</title>
        <authorList>
            <person name="Matsuyama A."/>
            <person name="Arai R."/>
            <person name="Yashiroda Y."/>
            <person name="Shirai A."/>
            <person name="Kamata A."/>
            <person name="Sekido S."/>
            <person name="Kobayashi Y."/>
            <person name="Hashimoto A."/>
            <person name="Hamamoto M."/>
            <person name="Hiraoka Y."/>
            <person name="Horinouchi S."/>
            <person name="Yoshida M."/>
        </authorList>
    </citation>
    <scope>SUBCELLULAR LOCATION [LARGE SCALE ANALYSIS]</scope>
</reference>
<reference key="4">
    <citation type="journal article" date="2008" name="J. Proteome Res.">
        <title>Phosphoproteome analysis of fission yeast.</title>
        <authorList>
            <person name="Wilson-Grady J.T."/>
            <person name="Villen J."/>
            <person name="Gygi S.P."/>
        </authorList>
    </citation>
    <scope>PHOSPHORYLATION [LARGE SCALE ANALYSIS] AT SER-236 AND SER-238</scope>
    <scope>IDENTIFICATION BY MASS SPECTROMETRY</scope>
</reference>
<accession>O13803</accession>
<accession>Q9USF4</accession>
<organism>
    <name type="scientific">Schizosaccharomyces pombe (strain 972 / ATCC 24843)</name>
    <name type="common">Fission yeast</name>
    <dbReference type="NCBI Taxonomy" id="284812"/>
    <lineage>
        <taxon>Eukaryota</taxon>
        <taxon>Fungi</taxon>
        <taxon>Dikarya</taxon>
        <taxon>Ascomycota</taxon>
        <taxon>Taphrinomycotina</taxon>
        <taxon>Schizosaccharomycetes</taxon>
        <taxon>Schizosaccharomycetales</taxon>
        <taxon>Schizosaccharomycetaceae</taxon>
        <taxon>Schizosaccharomyces</taxon>
    </lineage>
</organism>
<evidence type="ECO:0000256" key="1">
    <source>
        <dbReference type="SAM" id="MobiDB-lite"/>
    </source>
</evidence>
<evidence type="ECO:0000269" key="2">
    <source>
    </source>
</evidence>
<evidence type="ECO:0000269" key="3">
    <source>
    </source>
</evidence>
<evidence type="ECO:0000269" key="4">
    <source>
    </source>
</evidence>
<feature type="chain" id="PRO_0000116689" description="Uncharacterized protein C17H9.06c">
    <location>
        <begin position="1"/>
        <end position="601"/>
    </location>
</feature>
<feature type="region of interest" description="Disordered" evidence="1">
    <location>
        <begin position="24"/>
        <end position="106"/>
    </location>
</feature>
<feature type="region of interest" description="Disordered" evidence="1">
    <location>
        <begin position="171"/>
        <end position="219"/>
    </location>
</feature>
<feature type="region of interest" description="Disordered" evidence="1">
    <location>
        <begin position="260"/>
        <end position="283"/>
    </location>
</feature>
<feature type="compositionally biased region" description="Basic residues" evidence="1">
    <location>
        <begin position="24"/>
        <end position="35"/>
    </location>
</feature>
<feature type="compositionally biased region" description="Polar residues" evidence="1">
    <location>
        <begin position="54"/>
        <end position="81"/>
    </location>
</feature>
<feature type="compositionally biased region" description="Basic and acidic residues" evidence="1">
    <location>
        <begin position="92"/>
        <end position="106"/>
    </location>
</feature>
<feature type="modified residue" description="Phosphoserine" evidence="4">
    <location>
        <position position="236"/>
    </location>
</feature>
<feature type="modified residue" description="Phosphoserine" evidence="4">
    <location>
        <position position="238"/>
    </location>
</feature>
<comment type="subcellular location">
    <subcellularLocation>
        <location evidence="2 3">Nucleus</location>
    </subcellularLocation>
</comment>
<dbReference type="EMBL" id="CU329670">
    <property type="protein sequence ID" value="CAB11215.1"/>
    <property type="molecule type" value="Genomic_DNA"/>
</dbReference>
<dbReference type="EMBL" id="AB027794">
    <property type="protein sequence ID" value="BAA87098.1"/>
    <property type="molecule type" value="Genomic_DNA"/>
</dbReference>
<dbReference type="PIR" id="T37872">
    <property type="entry name" value="T37872"/>
</dbReference>
<dbReference type="RefSeq" id="NP_593576.1">
    <property type="nucleotide sequence ID" value="NM_001019008.2"/>
</dbReference>
<dbReference type="BioGRID" id="278764">
    <property type="interactions" value="11"/>
</dbReference>
<dbReference type="FunCoup" id="O13803">
    <property type="interactions" value="279"/>
</dbReference>
<dbReference type="STRING" id="284812.O13803"/>
<dbReference type="iPTMnet" id="O13803"/>
<dbReference type="PaxDb" id="4896-SPAC17H9.06c.1"/>
<dbReference type="EnsemblFungi" id="SPAC17H9.06c.1">
    <property type="protein sequence ID" value="SPAC17H9.06c.1:pep"/>
    <property type="gene ID" value="SPAC17H9.06c"/>
</dbReference>
<dbReference type="KEGG" id="spo:2542297"/>
<dbReference type="PomBase" id="SPAC17H9.06c"/>
<dbReference type="VEuPathDB" id="FungiDB:SPAC17H9.06c"/>
<dbReference type="eggNOG" id="ENOG502S7B9">
    <property type="taxonomic scope" value="Eukaryota"/>
</dbReference>
<dbReference type="HOGENOM" id="CLU_454284_0_0_1"/>
<dbReference type="InParanoid" id="O13803"/>
<dbReference type="OMA" id="ETHRNIH"/>
<dbReference type="PRO" id="PR:O13803"/>
<dbReference type="Proteomes" id="UP000002485">
    <property type="component" value="Chromosome I"/>
</dbReference>
<dbReference type="GO" id="GO:0005634">
    <property type="term" value="C:nucleus"/>
    <property type="evidence" value="ECO:0007005"/>
    <property type="project" value="PomBase"/>
</dbReference>
<dbReference type="InterPro" id="IPR025451">
    <property type="entry name" value="DUF4211"/>
</dbReference>
<dbReference type="PANTHER" id="PTHR14689:SF0">
    <property type="entry name" value="COILED-COIL DOMAIN-CONTAINING PROTEIN 82"/>
    <property type="match status" value="1"/>
</dbReference>
<dbReference type="PANTHER" id="PTHR14689">
    <property type="entry name" value="PHORBOL-ESTER_DAG-TYPE DOMAIN-CONTAINING PROTEIN"/>
    <property type="match status" value="1"/>
</dbReference>
<dbReference type="Pfam" id="PF13926">
    <property type="entry name" value="DUF4211"/>
    <property type="match status" value="1"/>
</dbReference>
<keyword id="KW-0539">Nucleus</keyword>
<keyword id="KW-0597">Phosphoprotein</keyword>
<keyword id="KW-1185">Reference proteome</keyword>